<reference key="1">
    <citation type="journal article" date="2008" name="PLoS ONE">
        <title>Genetic basis of virulence attenuation revealed by comparative genomic analysis of Mycobacterium tuberculosis strain H37Ra versus H37Rv.</title>
        <authorList>
            <person name="Zheng H."/>
            <person name="Lu L."/>
            <person name="Wang B."/>
            <person name="Pu S."/>
            <person name="Zhang X."/>
            <person name="Zhu G."/>
            <person name="Shi W."/>
            <person name="Zhang L."/>
            <person name="Wang H."/>
            <person name="Wang S."/>
            <person name="Zhao G."/>
            <person name="Zhang Y."/>
        </authorList>
    </citation>
    <scope>NUCLEOTIDE SEQUENCE [LARGE SCALE GENOMIC DNA]</scope>
    <source>
        <strain>ATCC 25177 / H37Ra</strain>
    </source>
</reference>
<dbReference type="EMBL" id="CP000611">
    <property type="protein sequence ID" value="ABQ74207.1"/>
    <property type="molecule type" value="Genomic_DNA"/>
</dbReference>
<dbReference type="RefSeq" id="WP_003899314.1">
    <property type="nucleotide sequence ID" value="NZ_CP016972.1"/>
</dbReference>
<dbReference type="SMR" id="A5U5A7"/>
<dbReference type="KEGG" id="mra:MRA_2437"/>
<dbReference type="eggNOG" id="COG0268">
    <property type="taxonomic scope" value="Bacteria"/>
</dbReference>
<dbReference type="HOGENOM" id="CLU_160655_0_1_11"/>
<dbReference type="Proteomes" id="UP000001988">
    <property type="component" value="Chromosome"/>
</dbReference>
<dbReference type="GO" id="GO:0005829">
    <property type="term" value="C:cytosol"/>
    <property type="evidence" value="ECO:0007669"/>
    <property type="project" value="TreeGrafter"/>
</dbReference>
<dbReference type="GO" id="GO:0015935">
    <property type="term" value="C:small ribosomal subunit"/>
    <property type="evidence" value="ECO:0007669"/>
    <property type="project" value="TreeGrafter"/>
</dbReference>
<dbReference type="GO" id="GO:0070181">
    <property type="term" value="F:small ribosomal subunit rRNA binding"/>
    <property type="evidence" value="ECO:0007669"/>
    <property type="project" value="TreeGrafter"/>
</dbReference>
<dbReference type="GO" id="GO:0003735">
    <property type="term" value="F:structural constituent of ribosome"/>
    <property type="evidence" value="ECO:0007669"/>
    <property type="project" value="InterPro"/>
</dbReference>
<dbReference type="GO" id="GO:0006412">
    <property type="term" value="P:translation"/>
    <property type="evidence" value="ECO:0007669"/>
    <property type="project" value="UniProtKB-UniRule"/>
</dbReference>
<dbReference type="FunFam" id="1.20.58.110:FF:000001">
    <property type="entry name" value="30S ribosomal protein S20"/>
    <property type="match status" value="1"/>
</dbReference>
<dbReference type="Gene3D" id="1.20.58.110">
    <property type="entry name" value="Ribosomal protein S20"/>
    <property type="match status" value="1"/>
</dbReference>
<dbReference type="HAMAP" id="MF_00500">
    <property type="entry name" value="Ribosomal_bS20"/>
    <property type="match status" value="1"/>
</dbReference>
<dbReference type="InterPro" id="IPR002583">
    <property type="entry name" value="Ribosomal_bS20"/>
</dbReference>
<dbReference type="InterPro" id="IPR036510">
    <property type="entry name" value="Ribosomal_bS20_sf"/>
</dbReference>
<dbReference type="NCBIfam" id="TIGR00029">
    <property type="entry name" value="S20"/>
    <property type="match status" value="1"/>
</dbReference>
<dbReference type="PANTHER" id="PTHR33398">
    <property type="entry name" value="30S RIBOSOMAL PROTEIN S20"/>
    <property type="match status" value="1"/>
</dbReference>
<dbReference type="PANTHER" id="PTHR33398:SF1">
    <property type="entry name" value="SMALL RIBOSOMAL SUBUNIT PROTEIN BS20C"/>
    <property type="match status" value="1"/>
</dbReference>
<dbReference type="Pfam" id="PF01649">
    <property type="entry name" value="Ribosomal_S20p"/>
    <property type="match status" value="1"/>
</dbReference>
<dbReference type="SUPFAM" id="SSF46992">
    <property type="entry name" value="Ribosomal protein S20"/>
    <property type="match status" value="1"/>
</dbReference>
<proteinExistence type="inferred from homology"/>
<sequence length="86" mass="9405">MANIKSQQKRNRTNERARLRNKAVKSSLRTAVRAFREAAHAGDKAKAAELLASTNRKLDKAASKGVIHKNQAANKKSALAQALNKL</sequence>
<name>RS20_MYCTA</name>
<accession>A5U5A7</accession>
<feature type="chain" id="PRO_1000014610" description="Small ribosomal subunit protein bS20">
    <location>
        <begin position="1"/>
        <end position="86"/>
    </location>
</feature>
<feature type="region of interest" description="Disordered" evidence="2">
    <location>
        <begin position="1"/>
        <end position="25"/>
    </location>
</feature>
<organism>
    <name type="scientific">Mycobacterium tuberculosis (strain ATCC 25177 / H37Ra)</name>
    <dbReference type="NCBI Taxonomy" id="419947"/>
    <lineage>
        <taxon>Bacteria</taxon>
        <taxon>Bacillati</taxon>
        <taxon>Actinomycetota</taxon>
        <taxon>Actinomycetes</taxon>
        <taxon>Mycobacteriales</taxon>
        <taxon>Mycobacteriaceae</taxon>
        <taxon>Mycobacterium</taxon>
        <taxon>Mycobacterium tuberculosis complex</taxon>
    </lineage>
</organism>
<comment type="function">
    <text evidence="1">Binds directly to 16S ribosomal RNA.</text>
</comment>
<comment type="similarity">
    <text evidence="1">Belongs to the bacterial ribosomal protein bS20 family.</text>
</comment>
<evidence type="ECO:0000255" key="1">
    <source>
        <dbReference type="HAMAP-Rule" id="MF_00500"/>
    </source>
</evidence>
<evidence type="ECO:0000256" key="2">
    <source>
        <dbReference type="SAM" id="MobiDB-lite"/>
    </source>
</evidence>
<evidence type="ECO:0000305" key="3"/>
<keyword id="KW-1185">Reference proteome</keyword>
<keyword id="KW-0687">Ribonucleoprotein</keyword>
<keyword id="KW-0689">Ribosomal protein</keyword>
<keyword id="KW-0694">RNA-binding</keyword>
<keyword id="KW-0699">rRNA-binding</keyword>
<protein>
    <recommendedName>
        <fullName evidence="1">Small ribosomal subunit protein bS20</fullName>
    </recommendedName>
    <alternativeName>
        <fullName evidence="3">30S ribosomal protein S20</fullName>
    </alternativeName>
</protein>
<gene>
    <name evidence="1" type="primary">rpsT</name>
    <name type="ordered locus">MRA_2437</name>
</gene>